<feature type="chain" id="PRO_0000314589" description="CCR4-NOT transcription complex subunit 6-like-A">
    <location>
        <begin position="1"/>
        <end position="550"/>
    </location>
</feature>
<feature type="repeat" description="LRR 1">
    <location>
        <begin position="52"/>
        <end position="73"/>
    </location>
</feature>
<feature type="repeat" description="LRR 2">
    <location>
        <begin position="75"/>
        <end position="96"/>
    </location>
</feature>
<feature type="repeat" description="LRR 3">
    <location>
        <begin position="98"/>
        <end position="120"/>
    </location>
</feature>
<feature type="repeat" description="LRR 4">
    <location>
        <begin position="121"/>
        <end position="143"/>
    </location>
</feature>
<feature type="region of interest" description="Required for interaction with cnot1, cnot3 and cnot7" evidence="1">
    <location>
        <begin position="1"/>
        <end position="148"/>
    </location>
</feature>
<feature type="region of interest" description="Nuclease domain" evidence="1">
    <location>
        <begin position="153"/>
        <end position="550"/>
    </location>
</feature>
<feature type="active site" description="Proton donor/acceptor" evidence="2">
    <location>
        <position position="405"/>
    </location>
</feature>
<feature type="binding site" evidence="2">
    <location>
        <position position="235"/>
    </location>
    <ligand>
        <name>Mg(2+)</name>
        <dbReference type="ChEBI" id="CHEBI:18420"/>
        <label>1</label>
    </ligand>
</feature>
<feature type="binding site" evidence="2">
    <location>
        <position position="235"/>
    </location>
    <ligand>
        <name>substrate</name>
    </ligand>
</feature>
<feature type="binding site" evidence="2">
    <location>
        <position position="271"/>
    </location>
    <ligand>
        <name>substrate</name>
    </ligand>
</feature>
<feature type="binding site" evidence="2">
    <location>
        <position position="355"/>
    </location>
    <ligand>
        <name>substrate</name>
    </ligand>
</feature>
<feature type="binding site" evidence="2">
    <location>
        <position position="360"/>
    </location>
    <ligand>
        <name>substrate</name>
    </ligand>
</feature>
<feature type="binding site" evidence="2">
    <location>
        <position position="405"/>
    </location>
    <ligand>
        <name>Mg(2+)</name>
        <dbReference type="ChEBI" id="CHEBI:18420"/>
        <label>2</label>
    </ligand>
</feature>
<feature type="binding site" evidence="2">
    <location>
        <position position="407"/>
    </location>
    <ligand>
        <name>substrate</name>
    </ligand>
</feature>
<feature type="binding site" evidence="2">
    <location>
        <position position="474"/>
    </location>
    <ligand>
        <name>substrate</name>
    </ligand>
</feature>
<feature type="binding site" evidence="2">
    <location>
        <position position="479"/>
    </location>
    <ligand>
        <name>substrate</name>
    </ligand>
</feature>
<name>CN6LA_XENLA</name>
<gene>
    <name type="primary">cnot6l-a</name>
</gene>
<organism>
    <name type="scientific">Xenopus laevis</name>
    <name type="common">African clawed frog</name>
    <dbReference type="NCBI Taxonomy" id="8355"/>
    <lineage>
        <taxon>Eukaryota</taxon>
        <taxon>Metazoa</taxon>
        <taxon>Chordata</taxon>
        <taxon>Craniata</taxon>
        <taxon>Vertebrata</taxon>
        <taxon>Euteleostomi</taxon>
        <taxon>Amphibia</taxon>
        <taxon>Batrachia</taxon>
        <taxon>Anura</taxon>
        <taxon>Pipoidea</taxon>
        <taxon>Pipidae</taxon>
        <taxon>Xenopodinae</taxon>
        <taxon>Xenopus</taxon>
        <taxon>Xenopus</taxon>
    </lineage>
</organism>
<evidence type="ECO:0000250" key="1"/>
<evidence type="ECO:0000250" key="2">
    <source>
        <dbReference type="UniProtKB" id="Q96LI5"/>
    </source>
</evidence>
<evidence type="ECO:0000305" key="3"/>
<dbReference type="EC" id="3.1.13.4" evidence="2"/>
<dbReference type="EMBL" id="BC071015">
    <property type="protein sequence ID" value="AAH71015.1"/>
    <property type="molecule type" value="mRNA"/>
</dbReference>
<dbReference type="RefSeq" id="NP_001085037.1">
    <property type="nucleotide sequence ID" value="NM_001091568.1"/>
</dbReference>
<dbReference type="RefSeq" id="XP_018100111.1">
    <property type="nucleotide sequence ID" value="XM_018244622.1"/>
</dbReference>
<dbReference type="RefSeq" id="XP_018100120.1">
    <property type="nucleotide sequence ID" value="XM_018244631.1"/>
</dbReference>
<dbReference type="SMR" id="Q6IR85"/>
<dbReference type="DNASU" id="432104"/>
<dbReference type="GeneID" id="432104"/>
<dbReference type="KEGG" id="xla:432104"/>
<dbReference type="AGR" id="Xenbase:XB-GENE-6256009"/>
<dbReference type="CTD" id="432104"/>
<dbReference type="Xenbase" id="XB-GENE-6256009">
    <property type="gene designation" value="cnot6l.L"/>
</dbReference>
<dbReference type="OMA" id="PHYYARA"/>
<dbReference type="OrthoDB" id="428734at2759"/>
<dbReference type="Proteomes" id="UP000186698">
    <property type="component" value="Chromosome 1L"/>
</dbReference>
<dbReference type="Bgee" id="432104">
    <property type="expression patterns" value="Expressed in egg cell and 19 other cell types or tissues"/>
</dbReference>
<dbReference type="GO" id="GO:0030014">
    <property type="term" value="C:CCR4-NOT complex"/>
    <property type="evidence" value="ECO:0000250"/>
    <property type="project" value="UniProtKB"/>
</dbReference>
<dbReference type="GO" id="GO:0005737">
    <property type="term" value="C:cytoplasm"/>
    <property type="evidence" value="ECO:0000250"/>
    <property type="project" value="UniProtKB"/>
</dbReference>
<dbReference type="GO" id="GO:0005634">
    <property type="term" value="C:nucleus"/>
    <property type="evidence" value="ECO:0000250"/>
    <property type="project" value="UniProtKB"/>
</dbReference>
<dbReference type="GO" id="GO:0000175">
    <property type="term" value="F:3'-5'-RNA exonuclease activity"/>
    <property type="evidence" value="ECO:0000318"/>
    <property type="project" value="GO_Central"/>
</dbReference>
<dbReference type="GO" id="GO:0046872">
    <property type="term" value="F:metal ion binding"/>
    <property type="evidence" value="ECO:0007669"/>
    <property type="project" value="UniProtKB-KW"/>
</dbReference>
<dbReference type="GO" id="GO:0004535">
    <property type="term" value="F:poly(A)-specific ribonuclease activity"/>
    <property type="evidence" value="ECO:0007669"/>
    <property type="project" value="UniProtKB-EC"/>
</dbReference>
<dbReference type="GO" id="GO:0006397">
    <property type="term" value="P:mRNA processing"/>
    <property type="evidence" value="ECO:0007669"/>
    <property type="project" value="UniProtKB-KW"/>
</dbReference>
<dbReference type="GO" id="GO:0006417">
    <property type="term" value="P:regulation of translation"/>
    <property type="evidence" value="ECO:0007669"/>
    <property type="project" value="UniProtKB-KW"/>
</dbReference>
<dbReference type="GO" id="GO:0031047">
    <property type="term" value="P:regulatory ncRNA-mediated gene silencing"/>
    <property type="evidence" value="ECO:0007669"/>
    <property type="project" value="UniProtKB-KW"/>
</dbReference>
<dbReference type="CDD" id="cd10312">
    <property type="entry name" value="Deadenylase_CCR4b"/>
    <property type="match status" value="1"/>
</dbReference>
<dbReference type="FunFam" id="3.60.10.10:FF:000002">
    <property type="entry name" value="CCR4-NOT transcription complex subunit 6 like"/>
    <property type="match status" value="1"/>
</dbReference>
<dbReference type="FunFam" id="3.80.10.10:FF:000008">
    <property type="entry name" value="CCR4-NOT transcription complex subunit 6 like"/>
    <property type="match status" value="1"/>
</dbReference>
<dbReference type="Gene3D" id="3.60.10.10">
    <property type="entry name" value="Endonuclease/exonuclease/phosphatase"/>
    <property type="match status" value="1"/>
</dbReference>
<dbReference type="Gene3D" id="3.80.10.10">
    <property type="entry name" value="Ribonuclease Inhibitor"/>
    <property type="match status" value="1"/>
</dbReference>
<dbReference type="InterPro" id="IPR050410">
    <property type="entry name" value="CCR4/nocturin_mRNA_transcr"/>
</dbReference>
<dbReference type="InterPro" id="IPR034967">
    <property type="entry name" value="Deadenylase_CCR4b"/>
</dbReference>
<dbReference type="InterPro" id="IPR036691">
    <property type="entry name" value="Endo/exonu/phosph_ase_sf"/>
</dbReference>
<dbReference type="InterPro" id="IPR005135">
    <property type="entry name" value="Endo/exonuclease/phosphatase"/>
</dbReference>
<dbReference type="InterPro" id="IPR001611">
    <property type="entry name" value="Leu-rich_rpt"/>
</dbReference>
<dbReference type="InterPro" id="IPR003591">
    <property type="entry name" value="Leu-rich_rpt_typical-subtyp"/>
</dbReference>
<dbReference type="InterPro" id="IPR032675">
    <property type="entry name" value="LRR_dom_sf"/>
</dbReference>
<dbReference type="PANTHER" id="PTHR12121">
    <property type="entry name" value="CARBON CATABOLITE REPRESSOR PROTEIN 4"/>
    <property type="match status" value="1"/>
</dbReference>
<dbReference type="PANTHER" id="PTHR12121:SF35">
    <property type="entry name" value="CCR4-NOT TRANSCRIPTION COMPLEX SUBUNIT 6-LIKE"/>
    <property type="match status" value="1"/>
</dbReference>
<dbReference type="Pfam" id="PF03372">
    <property type="entry name" value="Exo_endo_phos"/>
    <property type="match status" value="2"/>
</dbReference>
<dbReference type="Pfam" id="PF13855">
    <property type="entry name" value="LRR_8"/>
    <property type="match status" value="1"/>
</dbReference>
<dbReference type="SMART" id="SM00369">
    <property type="entry name" value="LRR_TYP"/>
    <property type="match status" value="3"/>
</dbReference>
<dbReference type="SUPFAM" id="SSF56219">
    <property type="entry name" value="DNase I-like"/>
    <property type="match status" value="1"/>
</dbReference>
<dbReference type="SUPFAM" id="SSF52058">
    <property type="entry name" value="L domain-like"/>
    <property type="match status" value="1"/>
</dbReference>
<dbReference type="PROSITE" id="PS51450">
    <property type="entry name" value="LRR"/>
    <property type="match status" value="4"/>
</dbReference>
<accession>Q6IR85</accession>
<comment type="function">
    <text evidence="1">Poly(A) nuclease with 3'-5' RNase activity. Catalytic component of the CCR4-NOT complex which is one of the major cellular mRNA deadenylases and is linked to various cellular processes including bulk mRNA degradation, miRNA-mediated repression, translational repression during translational initiation and general transcription regulation. Additional complex functions may be a consequence of its influence on mRNA expression (By similarity).</text>
</comment>
<comment type="catalytic activity">
    <reaction evidence="2">
        <text>Exonucleolytic cleavage of poly(A) to 5'-AMP.</text>
        <dbReference type="EC" id="3.1.13.4"/>
    </reaction>
</comment>
<comment type="cofactor">
    <cofactor evidence="2">
        <name>Mg(2+)</name>
        <dbReference type="ChEBI" id="CHEBI:18420"/>
    </cofactor>
    <text evidence="2">Binds 2 magnesium ions, but the ions interact each with only 1 or 2 residues.</text>
</comment>
<comment type="subunit">
    <text evidence="2">Component of the CCR4-NOT complex.</text>
</comment>
<comment type="subcellular location">
    <subcellularLocation>
        <location evidence="2">Cytoplasm</location>
    </subcellularLocation>
    <subcellularLocation>
        <location evidence="2">Nucleus</location>
    </subcellularLocation>
    <text evidence="2">Predominantly cytoplasmic.</text>
</comment>
<comment type="similarity">
    <text evidence="3">Belongs to the CCR4/nocturin family.</text>
</comment>
<keyword id="KW-0963">Cytoplasm</keyword>
<keyword id="KW-0269">Exonuclease</keyword>
<keyword id="KW-0378">Hydrolase</keyword>
<keyword id="KW-0433">Leucine-rich repeat</keyword>
<keyword id="KW-0460">Magnesium</keyword>
<keyword id="KW-0479">Metal-binding</keyword>
<keyword id="KW-0507">mRNA processing</keyword>
<keyword id="KW-0540">Nuclease</keyword>
<keyword id="KW-0539">Nucleus</keyword>
<keyword id="KW-1185">Reference proteome</keyword>
<keyword id="KW-0677">Repeat</keyword>
<keyword id="KW-0943">RNA-mediated gene silencing</keyword>
<keyword id="KW-0804">Transcription</keyword>
<keyword id="KW-0805">Transcription regulation</keyword>
<keyword id="KW-0810">Translation regulation</keyword>
<sequence>MPKEKYDPPDPRRIYTIMSAEEVANGKKSHWDELEISGRVRSLSTSLWTLTHLTVLHLSDNNLSRIPPDIAKLHNLVYLDLSSNKLRSLPAELGNVVSLRELLLNNNLLRVLPFELGRLFRLQTLGLKGNPLSQDILSLYQEPDGMRKLLNYMLDNLSVHPEQLPHRPWITLKERDQILPSVSFTVMCYNVLCDKYATRQLYGYCPSWALNWEYRKKGIMDEIISCDADIISLQEVETEQYFTLFMPALEERGYDGFFSPKSRAKIMSDQEKKHVDGCAIFFRTEKFSLVQKHTVEFNQIAMANSEGSEAMLNRVMTKDNIGVSVLLEVHKDFSGAGMKPHHSSEKQLLMVANAHMHWDPEYSDVKLIQTMMFVSELKSIIEKAACRPGSPTPDPNSIPFVLCADLNSLLDSGVVEYLTNGGVADNHKDFKELRYNECLTNFNCNGKNGTPDGRITHGFQLRSAYENNLMPYTNYTFDFKGVIDYIFYSKTHMDVLGILGPLDPQWMMDNNITGCPHPHIPSDHFSLLTQLELHPPLLPIINGVHLPSRR</sequence>
<proteinExistence type="evidence at transcript level"/>
<reference key="1">
    <citation type="submission" date="2004-05" db="EMBL/GenBank/DDBJ databases">
        <authorList>
            <consortium name="NIH - Xenopus Gene Collection (XGC) project"/>
        </authorList>
    </citation>
    <scope>NUCLEOTIDE SEQUENCE [LARGE SCALE MRNA]</scope>
    <source>
        <tissue>Embryo</tissue>
    </source>
</reference>
<protein>
    <recommendedName>
        <fullName>CCR4-NOT transcription complex subunit 6-like-A</fullName>
        <ecNumber evidence="2">3.1.13.4</ecNumber>
    </recommendedName>
</protein>